<dbReference type="EMBL" id="AY446894">
    <property type="protein sequence ID" value="AAR31639.1"/>
    <property type="molecule type" value="Genomic_DNA"/>
</dbReference>
<dbReference type="RefSeq" id="YP_081535.1">
    <property type="nucleotide sequence ID" value="NC_006273.2"/>
</dbReference>
<dbReference type="BioGRID" id="1678018">
    <property type="interactions" value="12"/>
</dbReference>
<dbReference type="GeneID" id="3077465"/>
<dbReference type="KEGG" id="vg:3077465"/>
<dbReference type="Reactome" id="R-HSA-9610379">
    <property type="pathway name" value="HCMV Late Events"/>
</dbReference>
<dbReference type="Proteomes" id="UP000000938">
    <property type="component" value="Segment"/>
</dbReference>
<dbReference type="GO" id="GO:0042025">
    <property type="term" value="C:host cell nucleus"/>
    <property type="evidence" value="ECO:0007669"/>
    <property type="project" value="UniProtKB-SubCell"/>
</dbReference>
<dbReference type="InterPro" id="IPR004285">
    <property type="entry name" value="Herpes_UL87_C"/>
</dbReference>
<dbReference type="InterPro" id="IPR007618">
    <property type="entry name" value="Herpes_UL87_N"/>
</dbReference>
<dbReference type="Pfam" id="PF04532">
    <property type="entry name" value="DUF587"/>
    <property type="match status" value="1"/>
</dbReference>
<dbReference type="Pfam" id="PF03043">
    <property type="entry name" value="Herpes_UL87"/>
    <property type="match status" value="1"/>
</dbReference>
<comment type="function">
    <text evidence="1">Functions concordantly with UL87 to initiate transcription from over half of all active viral promoters in late infection, without affecting host transcription. Acts on and binds to viral early-late and late kinetic-class promoters.</text>
</comment>
<comment type="subcellular location">
    <subcellularLocation>
        <location evidence="1">Host nucleus</location>
    </subcellularLocation>
</comment>
<comment type="similarity">
    <text evidence="3">Belongs to the herpesviridae UL87 family.</text>
</comment>
<proteinExistence type="inferred from homology"/>
<accession>Q6SW55</accession>
<accession>D2K3P5</accession>
<evidence type="ECO:0000250" key="1">
    <source>
        <dbReference type="UniProtKB" id="P16730"/>
    </source>
</evidence>
<evidence type="ECO:0000256" key="2">
    <source>
        <dbReference type="SAM" id="MobiDB-lite"/>
    </source>
</evidence>
<evidence type="ECO:0000305" key="3"/>
<name>UL87_HCMVM</name>
<feature type="chain" id="PRO_0000418288" description="Uncharacterized protein UL87">
    <location>
        <begin position="1"/>
        <end position="941"/>
    </location>
</feature>
<feature type="region of interest" description="Disordered" evidence="2">
    <location>
        <begin position="479"/>
        <end position="508"/>
    </location>
</feature>
<feature type="region of interest" description="Disordered" evidence="2">
    <location>
        <begin position="910"/>
        <end position="941"/>
    </location>
</feature>
<feature type="compositionally biased region" description="Acidic residues" evidence="2">
    <location>
        <begin position="488"/>
        <end position="500"/>
    </location>
</feature>
<feature type="compositionally biased region" description="Low complexity" evidence="2">
    <location>
        <begin position="910"/>
        <end position="929"/>
    </location>
</feature>
<organism>
    <name type="scientific">Human cytomegalovirus (strain Merlin)</name>
    <name type="common">HHV-5</name>
    <name type="synonym">Human herpesvirus 5</name>
    <dbReference type="NCBI Taxonomy" id="295027"/>
    <lineage>
        <taxon>Viruses</taxon>
        <taxon>Duplodnaviria</taxon>
        <taxon>Heunggongvirae</taxon>
        <taxon>Peploviricota</taxon>
        <taxon>Herviviricetes</taxon>
        <taxon>Herpesvirales</taxon>
        <taxon>Orthoherpesviridae</taxon>
        <taxon>Betaherpesvirinae</taxon>
        <taxon>Cytomegalovirus</taxon>
        <taxon>Cytomegalovirus humanbeta5</taxon>
        <taxon>Human cytomegalovirus</taxon>
    </lineage>
</organism>
<organismHost>
    <name type="scientific">Homo sapiens</name>
    <name type="common">Human</name>
    <dbReference type="NCBI Taxonomy" id="9606"/>
</organismHost>
<keyword id="KW-1048">Host nucleus</keyword>
<keyword id="KW-1185">Reference proteome</keyword>
<reference key="1">
    <citation type="journal article" date="2004" name="J. Gen. Virol.">
        <title>Genetic content of wild-type human cytomegalovirus.</title>
        <authorList>
            <person name="Dolan A."/>
            <person name="Cunningham C."/>
            <person name="Hector R.D."/>
            <person name="Hassan-Walker A.F."/>
            <person name="Lee L."/>
            <person name="Addison C."/>
            <person name="Dargan D.J."/>
            <person name="McGeoch D.J."/>
            <person name="Gatherer D."/>
            <person name="Emery V.C."/>
            <person name="Griffiths P.D."/>
            <person name="Sinzger C."/>
            <person name="McSharry B.P."/>
            <person name="Wilkinson G.W.G."/>
            <person name="Davison A.J."/>
        </authorList>
    </citation>
    <scope>NUCLEOTIDE SEQUENCE [LARGE SCALE GENOMIC DNA]</scope>
</reference>
<sequence>MAGAAPRRLGCDALIVVGGSAMPRRVLHVPVHVRACNLTQELSTGEDARFCRPRPVNVERVRAVFAALYRACPIHVRTEPERVKLVLGRLLLGPVAVPCFCDGEVEGHGEHLVPTTQFCRGPLLYVHRRCCCGSVTAGRALSYHVLENHVATHVLRGLLSLTEWNRELPSLFCDCPGGGGASGTEERYAMACLPRDLSLHLDDYPYLMVEIGRVLSVSEVDDYVTAVSGYLGEAAAPRIQVHYKLLFGLNVRPQAPCALDATRDFFLLELQKLWLGVEYHHEVTSEFFGRVLAQLHRDRARVMMALRLPEQTVCHLSTFVLSRFKRQVLYFKLQVSYGKCRTGHADRSGGGGNGGNQGHHNLLCYRRLSVTFADTDTVWRNLFYVYYELARDLGSHGTENRPVNRGYGVSCAPRTSRLSPSESTVVSANGHALSSTALPTTSAGHKLSLPRDPAADRVRRYVCIISRLMYARYGERWRKHRQRRSETGEEEEEETLESGETDATPPFDFTGQQLRRAYQEHRRRKHLAVQRYAPCRRKLIGGMEFAEVTGVSLDRIAVNAFNTNRVINMKAALSSIAASGLGVRAPRLPKNMTHSFVMYKHTFKEPACTVSTFVSNDAVYINSLNVNIRGSYPEFLYSLGVYRLHVNIDHFFLPAVVCNSNSSLDVHGLEDQAVIRSERSKVYWTTNFPCMISHTNNVNVGWFKAATAIVPRVSGADLEAILLKELSCIKNMRDVCIDYGLHRVFTQLELRNSYQIPFLAKQLVLFLRACLLKLHGREKRLQLDRLVFEAAQRGLFDYSKNLTAHTKIKHTCALIGSRLANNVPKILARNKKVKLDHLGRNANVLTVCRHVEAHKIPRTRLKVLVEVLGVLQSISGTPHTREVIHQTLFRLCSAAAATSGLCSSPPPLCVSSSSSVPSVPTSVSVDGSSEPTSPRVRFASR</sequence>
<gene>
    <name type="primary">UL87</name>
</gene>
<protein>
    <recommendedName>
        <fullName>Uncharacterized protein UL87</fullName>
    </recommendedName>
</protein>